<sequence>MKEFDTIAAIATALGEGGIAIIRVSGNKALEIVNKIFRGINGKDLLDIKPYTMRYGHMIDENNEIIDEVIVSFMKGPRSFTAEDTVEINCHGGIVATNKVLQNVIKAGARLAEPGEFTKRAFLNGRIDLSQAEAVMDIITAKTELSMKSAMTQSQGRLSTEINNLRKEALDILALIEYAVDFTEDDEEPDETIPVKVKEDVITLRGKVNNLIDTADEGKLIRDGLSMVIVGKPNVGKSSLLNALLNEKRAIVTDIAGTTRDVIEEYINLDGIPVRLVDTAGIRETEDVVEKIGVEKSKEKINEADLVILMLDTSRELDEEDKEIIDYIKDRKYIVLLNKVDLDRKLSSEIVDNLENKIELSAKTGFGIDDLKSKIKDLFFNGSIDAESVMVTNTRHKEALYRASENLDGALNGLNNNEFLDLVSIYVTSALRALGEITGAELEEDLVNKIFAEFCCGK</sequence>
<feature type="chain" id="PRO_1000048821" description="tRNA modification GTPase MnmE">
    <location>
        <begin position="1"/>
        <end position="458"/>
    </location>
</feature>
<feature type="domain" description="TrmE-type G">
    <location>
        <begin position="224"/>
        <end position="380"/>
    </location>
</feature>
<feature type="binding site" evidence="1">
    <location>
        <position position="23"/>
    </location>
    <ligand>
        <name>(6S)-5-formyl-5,6,7,8-tetrahydrofolate</name>
        <dbReference type="ChEBI" id="CHEBI:57457"/>
    </ligand>
</feature>
<feature type="binding site" evidence="1">
    <location>
        <position position="87"/>
    </location>
    <ligand>
        <name>(6S)-5-formyl-5,6,7,8-tetrahydrofolate</name>
        <dbReference type="ChEBI" id="CHEBI:57457"/>
    </ligand>
</feature>
<feature type="binding site" evidence="1">
    <location>
        <position position="126"/>
    </location>
    <ligand>
        <name>(6S)-5-formyl-5,6,7,8-tetrahydrofolate</name>
        <dbReference type="ChEBI" id="CHEBI:57457"/>
    </ligand>
</feature>
<feature type="binding site" evidence="1">
    <location>
        <begin position="234"/>
        <end position="239"/>
    </location>
    <ligand>
        <name>GTP</name>
        <dbReference type="ChEBI" id="CHEBI:37565"/>
    </ligand>
</feature>
<feature type="binding site" evidence="1">
    <location>
        <position position="234"/>
    </location>
    <ligand>
        <name>K(+)</name>
        <dbReference type="ChEBI" id="CHEBI:29103"/>
    </ligand>
</feature>
<feature type="binding site" evidence="1">
    <location>
        <position position="238"/>
    </location>
    <ligand>
        <name>Mg(2+)</name>
        <dbReference type="ChEBI" id="CHEBI:18420"/>
    </ligand>
</feature>
<feature type="binding site" evidence="1">
    <location>
        <begin position="253"/>
        <end position="259"/>
    </location>
    <ligand>
        <name>GTP</name>
        <dbReference type="ChEBI" id="CHEBI:37565"/>
    </ligand>
</feature>
<feature type="binding site" evidence="1">
    <location>
        <position position="253"/>
    </location>
    <ligand>
        <name>K(+)</name>
        <dbReference type="ChEBI" id="CHEBI:29103"/>
    </ligand>
</feature>
<feature type="binding site" evidence="1">
    <location>
        <position position="255"/>
    </location>
    <ligand>
        <name>K(+)</name>
        <dbReference type="ChEBI" id="CHEBI:29103"/>
    </ligand>
</feature>
<feature type="binding site" evidence="1">
    <location>
        <position position="258"/>
    </location>
    <ligand>
        <name>K(+)</name>
        <dbReference type="ChEBI" id="CHEBI:29103"/>
    </ligand>
</feature>
<feature type="binding site" evidence="1">
    <location>
        <position position="259"/>
    </location>
    <ligand>
        <name>Mg(2+)</name>
        <dbReference type="ChEBI" id="CHEBI:18420"/>
    </ligand>
</feature>
<feature type="binding site" evidence="1">
    <location>
        <begin position="278"/>
        <end position="281"/>
    </location>
    <ligand>
        <name>GTP</name>
        <dbReference type="ChEBI" id="CHEBI:37565"/>
    </ligand>
</feature>
<feature type="binding site" evidence="1">
    <location>
        <position position="458"/>
    </location>
    <ligand>
        <name>(6S)-5-formyl-5,6,7,8-tetrahydrofolate</name>
        <dbReference type="ChEBI" id="CHEBI:57457"/>
    </ligand>
</feature>
<keyword id="KW-0963">Cytoplasm</keyword>
<keyword id="KW-0342">GTP-binding</keyword>
<keyword id="KW-0378">Hydrolase</keyword>
<keyword id="KW-0460">Magnesium</keyword>
<keyword id="KW-0479">Metal-binding</keyword>
<keyword id="KW-0547">Nucleotide-binding</keyword>
<keyword id="KW-0630">Potassium</keyword>
<keyword id="KW-0819">tRNA processing</keyword>
<proteinExistence type="inferred from homology"/>
<comment type="function">
    <text evidence="1">Exhibits a very high intrinsic GTPase hydrolysis rate. Involved in the addition of a carboxymethylaminomethyl (cmnm) group at the wobble position (U34) of certain tRNAs, forming tRNA-cmnm(5)s(2)U34.</text>
</comment>
<comment type="cofactor">
    <cofactor evidence="1">
        <name>K(+)</name>
        <dbReference type="ChEBI" id="CHEBI:29103"/>
    </cofactor>
    <text evidence="1">Binds 1 potassium ion per subunit.</text>
</comment>
<comment type="subunit">
    <text evidence="1">Homodimer. Heterotetramer of two MnmE and two MnmG subunits.</text>
</comment>
<comment type="subcellular location">
    <subcellularLocation>
        <location evidence="1">Cytoplasm</location>
    </subcellularLocation>
</comment>
<comment type="similarity">
    <text evidence="1">Belongs to the TRAFAC class TrmE-Era-EngA-EngB-Septin-like GTPase superfamily. TrmE GTPase family.</text>
</comment>
<name>MNME_CLOP1</name>
<evidence type="ECO:0000255" key="1">
    <source>
        <dbReference type="HAMAP-Rule" id="MF_00379"/>
    </source>
</evidence>
<protein>
    <recommendedName>
        <fullName evidence="1">tRNA modification GTPase MnmE</fullName>
        <ecNumber evidence="1">3.6.-.-</ecNumber>
    </recommendedName>
</protein>
<organism>
    <name type="scientific">Clostridium perfringens (strain ATCC 13124 / DSM 756 / JCM 1290 / NCIMB 6125 / NCTC 8237 / Type A)</name>
    <dbReference type="NCBI Taxonomy" id="195103"/>
    <lineage>
        <taxon>Bacteria</taxon>
        <taxon>Bacillati</taxon>
        <taxon>Bacillota</taxon>
        <taxon>Clostridia</taxon>
        <taxon>Eubacteriales</taxon>
        <taxon>Clostridiaceae</taxon>
        <taxon>Clostridium</taxon>
    </lineage>
</organism>
<reference key="1">
    <citation type="journal article" date="2006" name="Genome Res.">
        <title>Skewed genomic variability in strains of the toxigenic bacterial pathogen, Clostridium perfringens.</title>
        <authorList>
            <person name="Myers G.S.A."/>
            <person name="Rasko D.A."/>
            <person name="Cheung J.K."/>
            <person name="Ravel J."/>
            <person name="Seshadri R."/>
            <person name="DeBoy R.T."/>
            <person name="Ren Q."/>
            <person name="Varga J."/>
            <person name="Awad M.M."/>
            <person name="Brinkac L.M."/>
            <person name="Daugherty S.C."/>
            <person name="Haft D.H."/>
            <person name="Dodson R.J."/>
            <person name="Madupu R."/>
            <person name="Nelson W.C."/>
            <person name="Rosovitz M.J."/>
            <person name="Sullivan S.A."/>
            <person name="Khouri H."/>
            <person name="Dimitrov G.I."/>
            <person name="Watkins K.L."/>
            <person name="Mulligan S."/>
            <person name="Benton J."/>
            <person name="Radune D."/>
            <person name="Fisher D.J."/>
            <person name="Atkins H.S."/>
            <person name="Hiscox T."/>
            <person name="Jost B.H."/>
            <person name="Billington S.J."/>
            <person name="Songer J.G."/>
            <person name="McClane B.A."/>
            <person name="Titball R.W."/>
            <person name="Rood J.I."/>
            <person name="Melville S.B."/>
            <person name="Paulsen I.T."/>
        </authorList>
    </citation>
    <scope>NUCLEOTIDE SEQUENCE [LARGE SCALE GENOMIC DNA]</scope>
    <source>
        <strain>ATCC 13124 / DSM 756 / JCM 1290 / NCIMB 6125 / NCTC 8237 / S 107 / Type A</strain>
    </source>
</reference>
<accession>Q0TLZ4</accession>
<dbReference type="EC" id="3.6.-.-" evidence="1"/>
<dbReference type="EMBL" id="CP000246">
    <property type="protein sequence ID" value="ABG83398.1"/>
    <property type="molecule type" value="Genomic_DNA"/>
</dbReference>
<dbReference type="RefSeq" id="WP_003451045.1">
    <property type="nucleotide sequence ID" value="NC_008261.1"/>
</dbReference>
<dbReference type="SMR" id="Q0TLZ4"/>
<dbReference type="STRING" id="195103.CPF_2992"/>
<dbReference type="PaxDb" id="195103-CPF_2992"/>
<dbReference type="GeneID" id="93000730"/>
<dbReference type="KEGG" id="cpf:CPF_2992"/>
<dbReference type="eggNOG" id="COG0486">
    <property type="taxonomic scope" value="Bacteria"/>
</dbReference>
<dbReference type="HOGENOM" id="CLU_019624_4_1_9"/>
<dbReference type="Proteomes" id="UP000001823">
    <property type="component" value="Chromosome"/>
</dbReference>
<dbReference type="GO" id="GO:0005829">
    <property type="term" value="C:cytosol"/>
    <property type="evidence" value="ECO:0007669"/>
    <property type="project" value="TreeGrafter"/>
</dbReference>
<dbReference type="GO" id="GO:0005525">
    <property type="term" value="F:GTP binding"/>
    <property type="evidence" value="ECO:0007669"/>
    <property type="project" value="UniProtKB-UniRule"/>
</dbReference>
<dbReference type="GO" id="GO:0003924">
    <property type="term" value="F:GTPase activity"/>
    <property type="evidence" value="ECO:0007669"/>
    <property type="project" value="UniProtKB-UniRule"/>
</dbReference>
<dbReference type="GO" id="GO:0046872">
    <property type="term" value="F:metal ion binding"/>
    <property type="evidence" value="ECO:0007669"/>
    <property type="project" value="UniProtKB-KW"/>
</dbReference>
<dbReference type="GO" id="GO:0030488">
    <property type="term" value="P:tRNA methylation"/>
    <property type="evidence" value="ECO:0007669"/>
    <property type="project" value="TreeGrafter"/>
</dbReference>
<dbReference type="GO" id="GO:0002098">
    <property type="term" value="P:tRNA wobble uridine modification"/>
    <property type="evidence" value="ECO:0007669"/>
    <property type="project" value="TreeGrafter"/>
</dbReference>
<dbReference type="CDD" id="cd04164">
    <property type="entry name" value="trmE"/>
    <property type="match status" value="1"/>
</dbReference>
<dbReference type="CDD" id="cd14858">
    <property type="entry name" value="TrmE_N"/>
    <property type="match status" value="1"/>
</dbReference>
<dbReference type="FunFam" id="3.30.1360.120:FF:000003">
    <property type="entry name" value="tRNA modification GTPase MnmE"/>
    <property type="match status" value="1"/>
</dbReference>
<dbReference type="FunFam" id="3.40.50.300:FF:000494">
    <property type="entry name" value="tRNA modification GTPase MnmE"/>
    <property type="match status" value="1"/>
</dbReference>
<dbReference type="Gene3D" id="3.40.50.300">
    <property type="entry name" value="P-loop containing nucleotide triphosphate hydrolases"/>
    <property type="match status" value="1"/>
</dbReference>
<dbReference type="Gene3D" id="3.30.1360.120">
    <property type="entry name" value="Probable tRNA modification gtpase trme, domain 1"/>
    <property type="match status" value="1"/>
</dbReference>
<dbReference type="Gene3D" id="1.20.120.430">
    <property type="entry name" value="tRNA modification GTPase MnmE domain 2"/>
    <property type="match status" value="1"/>
</dbReference>
<dbReference type="HAMAP" id="MF_00379">
    <property type="entry name" value="GTPase_MnmE"/>
    <property type="match status" value="1"/>
</dbReference>
<dbReference type="InterPro" id="IPR031168">
    <property type="entry name" value="G_TrmE"/>
</dbReference>
<dbReference type="InterPro" id="IPR006073">
    <property type="entry name" value="GTP-bd"/>
</dbReference>
<dbReference type="InterPro" id="IPR018948">
    <property type="entry name" value="GTP-bd_TrmE_N"/>
</dbReference>
<dbReference type="InterPro" id="IPR004520">
    <property type="entry name" value="GTPase_MnmE"/>
</dbReference>
<dbReference type="InterPro" id="IPR027368">
    <property type="entry name" value="MnmE_dom2"/>
</dbReference>
<dbReference type="InterPro" id="IPR025867">
    <property type="entry name" value="MnmE_helical"/>
</dbReference>
<dbReference type="InterPro" id="IPR027417">
    <property type="entry name" value="P-loop_NTPase"/>
</dbReference>
<dbReference type="InterPro" id="IPR005225">
    <property type="entry name" value="Small_GTP-bd"/>
</dbReference>
<dbReference type="InterPro" id="IPR027266">
    <property type="entry name" value="TrmE/GcvT_dom1"/>
</dbReference>
<dbReference type="NCBIfam" id="TIGR00450">
    <property type="entry name" value="mnmE_trmE_thdF"/>
    <property type="match status" value="1"/>
</dbReference>
<dbReference type="NCBIfam" id="NF003661">
    <property type="entry name" value="PRK05291.1-3"/>
    <property type="match status" value="1"/>
</dbReference>
<dbReference type="NCBIfam" id="TIGR00231">
    <property type="entry name" value="small_GTP"/>
    <property type="match status" value="1"/>
</dbReference>
<dbReference type="PANTHER" id="PTHR42714">
    <property type="entry name" value="TRNA MODIFICATION GTPASE GTPBP3"/>
    <property type="match status" value="1"/>
</dbReference>
<dbReference type="PANTHER" id="PTHR42714:SF2">
    <property type="entry name" value="TRNA MODIFICATION GTPASE GTPBP3, MITOCHONDRIAL"/>
    <property type="match status" value="1"/>
</dbReference>
<dbReference type="Pfam" id="PF01926">
    <property type="entry name" value="MMR_HSR1"/>
    <property type="match status" value="1"/>
</dbReference>
<dbReference type="Pfam" id="PF12631">
    <property type="entry name" value="MnmE_helical"/>
    <property type="match status" value="1"/>
</dbReference>
<dbReference type="Pfam" id="PF10396">
    <property type="entry name" value="TrmE_N"/>
    <property type="match status" value="1"/>
</dbReference>
<dbReference type="PRINTS" id="PR00326">
    <property type="entry name" value="GTP1OBG"/>
</dbReference>
<dbReference type="SUPFAM" id="SSF52540">
    <property type="entry name" value="P-loop containing nucleoside triphosphate hydrolases"/>
    <property type="match status" value="1"/>
</dbReference>
<dbReference type="PROSITE" id="PS51709">
    <property type="entry name" value="G_TRME"/>
    <property type="match status" value="1"/>
</dbReference>
<gene>
    <name evidence="1" type="primary">mnmE</name>
    <name evidence="1" type="synonym">trmE</name>
    <name type="ordered locus">CPF_2992</name>
</gene>